<sequence length="661" mass="73252">MGKSEKRVATHGVRCFAKIKMFLLALTCAYVSKSLSGTYMNSMLTQIERQFGIPTSIVGLINGSFEIGNLLLIIFVSYFGTKLHRPIMIGVGCAVMGLGCFLISLPHFLMGQYEYETILPTSNVSSNSFFCVENRSQTLNPTQDPSECVKEMKSLMWIYVLVGNIIRGIGETPIMPLGISYIEDFAKSENSPLYIGILETGMTIGPLIGLLLASSCANIYVDIESVNTDDLTITPTDTRWVGAWWIGFLVCAGVNILTSFPFFFFPKTLPKEGLQENVDGTENAKEKKHRKKAKEEKRGITKDFFVFMKSLSCNPIYMLFILISVLQFNAFINSFTFMPKYLEQQYGKSTAEVVFLMGLYMLPPICLGYLIGGLIMKKFKVTVKKAAHLAFWLCLSEYLLSFLSYVMTCDNFPVAGLTTSYEGVQHQLYVENKVLADCNTRCNCSTNTWDPVCGDNGLAYMSACLAGCEKSVGTGTNMVFQNCSCIQSSGNSSAVLGLCNKGPDCANKLQYFLIIAIFGCFIYSLAGIPGYMVLLRCIKSEEKSLGVGLHAFCIRILAGIPAPIYFGALIDRTCLHWGTLKCGEPGACRMYDINSFRRLYLGLPAALRGASFVPAFFILRLTRTFQFPGDIESSKTDHAEMKLTLKESECTEVLRSKVTED</sequence>
<protein>
    <recommendedName>
        <fullName>Solute carrier organic anion transporter family member 1A4</fullName>
    </recommendedName>
    <alternativeName>
        <fullName>Brain digoxin carrier protein</fullName>
    </alternativeName>
    <alternativeName>
        <fullName>Brain-specific organic anion transporter</fullName>
    </alternativeName>
    <alternativeName>
        <fullName>OATP-B1</fullName>
    </alternativeName>
    <alternativeName>
        <fullName>Sodium-independent organic anion-transporting polypeptide 2</fullName>
    </alternativeName>
    <alternativeName>
        <fullName>Solute carrier family 21 member 5</fullName>
    </alternativeName>
</protein>
<name>SO1A4_RAT</name>
<proteinExistence type="evidence at protein level"/>
<reference key="1">
    <citation type="journal article" date="1997" name="Proc. Natl. Acad. Sci. U.S.A.">
        <title>Isolation of a multispecific organic anion and cardiac glycoside transporter from rat brain.</title>
        <authorList>
            <person name="Noe B."/>
            <person name="Hagenbuch B."/>
            <person name="Stieger B."/>
            <person name="Meier P.J."/>
        </authorList>
    </citation>
    <scope>NUCLEOTIDE SEQUENCE [MRNA]</scope>
    <source>
        <strain>Sprague-Dawley</strain>
        <tissue>Brain</tissue>
    </source>
</reference>
<reference key="2">
    <citation type="journal article" date="1998" name="J. Biol. Chem.">
        <title>Molecular characterization and tissue distribution of a new organic anion transporter subtype (oatp3) that transports thyroid hormones and taurocholate and comparison with oatp2.</title>
        <authorList>
            <person name="Abe T."/>
            <person name="Kakyo M."/>
            <person name="Sakagami H."/>
            <person name="Tokui T."/>
            <person name="Nishio T."/>
            <person name="Tanemoto M."/>
            <person name="Nomura H."/>
            <person name="Hebert S.C."/>
            <person name="Matsuno S."/>
            <person name="Kondo H."/>
            <person name="Yawo H."/>
        </authorList>
    </citation>
    <scope>NUCLEOTIDE SEQUENCE [MRNA]</scope>
    <source>
        <tissue>Retina</tissue>
    </source>
</reference>
<reference key="3">
    <citation type="journal article" date="2009" name="Am. J. Physiol.">
        <title>Mechanisms of pH-gradient driven transport mediated by organic anion polypeptide transporters.</title>
        <authorList>
            <person name="Leuthold S."/>
            <person name="Hagenbuch B."/>
            <person name="Mohebbi N."/>
            <person name="Wagner C.A."/>
            <person name="Meier P.J."/>
            <person name="Stieger B."/>
        </authorList>
    </citation>
    <scope>FUNCTION</scope>
    <scope>TRANSPORTER ACTIVITY</scope>
    <scope>BIOPHYSICOCHEMICAL PROPERTIES</scope>
    <scope>DOMAIN</scope>
</reference>
<keyword id="KW-1003">Cell membrane</keyword>
<keyword id="KW-1015">Disulfide bond</keyword>
<keyword id="KW-0325">Glycoprotein</keyword>
<keyword id="KW-0406">Ion transport</keyword>
<keyword id="KW-0472">Membrane</keyword>
<keyword id="KW-0597">Phosphoprotein</keyword>
<keyword id="KW-1185">Reference proteome</keyword>
<keyword id="KW-0812">Transmembrane</keyword>
<keyword id="KW-1133">Transmembrane helix</keyword>
<keyword id="KW-0813">Transport</keyword>
<gene>
    <name type="primary">Slco1a4</name>
    <name type="synonym">Oatp1a4</name>
    <name type="synonym">Oatp2</name>
    <name type="synonym">Slc21a5</name>
</gene>
<accession>O35913</accession>
<accession>O55224</accession>
<feature type="chain" id="PRO_0000191047" description="Solute carrier organic anion transporter family member 1A4">
    <location>
        <begin position="1"/>
        <end position="661"/>
    </location>
</feature>
<feature type="topological domain" description="Cytoplasmic" evidence="2">
    <location>
        <begin position="1"/>
        <end position="20"/>
    </location>
</feature>
<feature type="transmembrane region" description="Helical; Name=1" evidence="2">
    <location>
        <begin position="21"/>
        <end position="40"/>
    </location>
</feature>
<feature type="topological domain" description="Extracellular" evidence="2">
    <location>
        <begin position="41"/>
        <end position="59"/>
    </location>
</feature>
<feature type="transmembrane region" description="Helical; Name=2" evidence="2">
    <location>
        <begin position="60"/>
        <end position="80"/>
    </location>
</feature>
<feature type="topological domain" description="Cytoplasmic" evidence="2">
    <location>
        <begin position="81"/>
        <end position="86"/>
    </location>
</feature>
<feature type="transmembrane region" description="Helical; Name=3" evidence="2">
    <location>
        <begin position="87"/>
        <end position="111"/>
    </location>
</feature>
<feature type="topological domain" description="Extracellular" evidence="2">
    <location>
        <begin position="112"/>
        <end position="154"/>
    </location>
</feature>
<feature type="transmembrane region" description="Helical; Name=4" evidence="2">
    <location>
        <begin position="155"/>
        <end position="183"/>
    </location>
</feature>
<feature type="topological domain" description="Cytoplasmic" evidence="2">
    <location>
        <begin position="184"/>
        <end position="202"/>
    </location>
</feature>
<feature type="transmembrane region" description="Helical; Name=5" evidence="2">
    <location>
        <begin position="203"/>
        <end position="223"/>
    </location>
</feature>
<feature type="topological domain" description="Extracellular" evidence="2">
    <location>
        <begin position="224"/>
        <end position="241"/>
    </location>
</feature>
<feature type="transmembrane region" description="Helical; Name=6" evidence="2">
    <location>
        <begin position="242"/>
        <end position="266"/>
    </location>
</feature>
<feature type="topological domain" description="Cytoplasmic" evidence="2">
    <location>
        <begin position="267"/>
        <end position="310"/>
    </location>
</feature>
<feature type="transmembrane region" description="Helical; Name=7" evidence="2">
    <location>
        <begin position="311"/>
        <end position="332"/>
    </location>
</feature>
<feature type="topological domain" description="Extracellular" evidence="2">
    <location>
        <begin position="333"/>
        <end position="352"/>
    </location>
</feature>
<feature type="transmembrane region" description="Helical; Name=8" evidence="2">
    <location>
        <begin position="353"/>
        <end position="376"/>
    </location>
</feature>
<feature type="topological domain" description="Cytoplasmic" evidence="2">
    <location>
        <begin position="377"/>
        <end position="380"/>
    </location>
</feature>
<feature type="transmembrane region" description="Helical; Name=9" evidence="2">
    <location>
        <begin position="381"/>
        <end position="404"/>
    </location>
</feature>
<feature type="topological domain" description="Extracellular" evidence="2">
    <location>
        <begin position="405"/>
        <end position="512"/>
    </location>
</feature>
<feature type="transmembrane region" description="Helical; Name=10" evidence="2">
    <location>
        <begin position="513"/>
        <end position="535"/>
    </location>
</feature>
<feature type="topological domain" description="Cytoplasmic" evidence="2">
    <location>
        <begin position="536"/>
        <end position="544"/>
    </location>
</feature>
<feature type="transmembrane region" description="Helical; Name=11" evidence="2">
    <location>
        <begin position="545"/>
        <end position="570"/>
    </location>
</feature>
<feature type="topological domain" description="Extracellular" evidence="2">
    <location>
        <begin position="571"/>
        <end position="604"/>
    </location>
</feature>
<feature type="transmembrane region" description="Helical; Name=12" evidence="2">
    <location>
        <begin position="605"/>
        <end position="622"/>
    </location>
</feature>
<feature type="topological domain" description="Cytoplasmic" evidence="2">
    <location>
        <begin position="623"/>
        <end position="661"/>
    </location>
</feature>
<feature type="domain" description="Kazal-like" evidence="3">
    <location>
        <begin position="432"/>
        <end position="487"/>
    </location>
</feature>
<feature type="modified residue" description="Phosphoserine" evidence="1">
    <location>
        <position position="633"/>
    </location>
</feature>
<feature type="modified residue" description="Phosphoserine" evidence="1">
    <location>
        <position position="634"/>
    </location>
</feature>
<feature type="glycosylation site" description="N-linked (GlcNAc...) asparagine" evidence="2">
    <location>
        <position position="123"/>
    </location>
</feature>
<feature type="glycosylation site" description="N-linked (GlcNAc...) asparagine" evidence="2">
    <location>
        <position position="134"/>
    </location>
</feature>
<feature type="glycosylation site" description="N-linked (GlcNAc...) asparagine" evidence="2">
    <location>
        <position position="443"/>
    </location>
</feature>
<feature type="glycosylation site" description="N-linked (GlcNAc...) asparagine" evidence="2">
    <location>
        <position position="482"/>
    </location>
</feature>
<feature type="glycosylation site" description="N-linked (GlcNAc...) asparagine" evidence="2">
    <location>
        <position position="491"/>
    </location>
</feature>
<feature type="disulfide bond" evidence="3">
    <location>
        <begin position="438"/>
        <end position="468"/>
    </location>
</feature>
<feature type="disulfide bond" evidence="3">
    <location>
        <begin position="444"/>
        <end position="464"/>
    </location>
</feature>
<feature type="disulfide bond" evidence="3">
    <location>
        <begin position="453"/>
        <end position="485"/>
    </location>
</feature>
<feature type="sequence conflict" description="In Ref. 2; AAC32669." evidence="5" ref="2">
    <original>Y</original>
    <variation>N</variation>
    <location>
        <position position="360"/>
    </location>
</feature>
<feature type="sequence conflict" description="In Ref. 2; AAC32669." evidence="5" ref="2">
    <original>F</original>
    <variation>FF</variation>
    <location>
        <position position="617"/>
    </location>
</feature>
<evidence type="ECO:0000250" key="1">
    <source>
        <dbReference type="UniProtKB" id="P46720"/>
    </source>
</evidence>
<evidence type="ECO:0000255" key="2"/>
<evidence type="ECO:0000255" key="3">
    <source>
        <dbReference type="PROSITE-ProRule" id="PRU00798"/>
    </source>
</evidence>
<evidence type="ECO:0000269" key="4">
    <source>
    </source>
</evidence>
<evidence type="ECO:0000305" key="5"/>
<evidence type="ECO:0000305" key="6">
    <source>
    </source>
</evidence>
<dbReference type="EMBL" id="U88036">
    <property type="protein sequence ID" value="AAB80699.1"/>
    <property type="molecule type" value="mRNA"/>
</dbReference>
<dbReference type="EMBL" id="U95011">
    <property type="protein sequence ID" value="AAC32669.1"/>
    <property type="molecule type" value="mRNA"/>
</dbReference>
<dbReference type="RefSeq" id="NP_571981.1">
    <property type="nucleotide sequence ID" value="NM_131906.1"/>
</dbReference>
<dbReference type="RefSeq" id="XP_017447901.1">
    <property type="nucleotide sequence ID" value="XM_017592412.1"/>
</dbReference>
<dbReference type="SMR" id="O35913"/>
<dbReference type="STRING" id="10116.ENSRNOP00000040237"/>
<dbReference type="BindingDB" id="O35913"/>
<dbReference type="ChEMBL" id="CHEMBL1781860"/>
<dbReference type="GlyCosmos" id="O35913">
    <property type="glycosylation" value="5 sites, No reported glycans"/>
</dbReference>
<dbReference type="GlyGen" id="O35913">
    <property type="glycosylation" value="5 sites"/>
</dbReference>
<dbReference type="PhosphoSitePlus" id="O35913"/>
<dbReference type="PaxDb" id="10116-ENSRNOP00000040237"/>
<dbReference type="Ensembl" id="ENSRNOT00000043374.4">
    <property type="protein sequence ID" value="ENSRNOP00000042595.3"/>
    <property type="gene ID" value="ENSRNOG00000047493.4"/>
</dbReference>
<dbReference type="GeneID" id="170698"/>
<dbReference type="KEGG" id="rno:170698"/>
<dbReference type="AGR" id="RGD:621389"/>
<dbReference type="CTD" id="28250"/>
<dbReference type="RGD" id="621389">
    <property type="gene designation" value="Slco1a4"/>
</dbReference>
<dbReference type="eggNOG" id="KOG3626">
    <property type="taxonomic scope" value="Eukaryota"/>
</dbReference>
<dbReference type="GeneTree" id="ENSGT01130000278312"/>
<dbReference type="HOGENOM" id="CLU_008954_4_0_1"/>
<dbReference type="InParanoid" id="O35913"/>
<dbReference type="OrthoDB" id="5062115at2759"/>
<dbReference type="PhylomeDB" id="O35913"/>
<dbReference type="Reactome" id="R-RNO-159418">
    <property type="pathway name" value="Recycling of bile acids and salts"/>
</dbReference>
<dbReference type="Reactome" id="R-RNO-879518">
    <property type="pathway name" value="Transport of organic anions"/>
</dbReference>
<dbReference type="Reactome" id="R-RNO-9793528">
    <property type="pathway name" value="Ciprofloxacin ADME"/>
</dbReference>
<dbReference type="PRO" id="PR:O35913"/>
<dbReference type="Proteomes" id="UP000002494">
    <property type="component" value="Chromosome 4"/>
</dbReference>
<dbReference type="Bgee" id="ENSRNOG00000047493">
    <property type="expression patterns" value="Expressed in liver and 14 other cell types or tissues"/>
</dbReference>
<dbReference type="GO" id="GO:0009925">
    <property type="term" value="C:basal plasma membrane"/>
    <property type="evidence" value="ECO:0000314"/>
    <property type="project" value="ARUK-UCL"/>
</dbReference>
<dbReference type="GO" id="GO:0016323">
    <property type="term" value="C:basolateral plasma membrane"/>
    <property type="evidence" value="ECO:0000318"/>
    <property type="project" value="GO_Central"/>
</dbReference>
<dbReference type="GO" id="GO:0016020">
    <property type="term" value="C:membrane"/>
    <property type="evidence" value="ECO:0000266"/>
    <property type="project" value="RGD"/>
</dbReference>
<dbReference type="GO" id="GO:0005886">
    <property type="term" value="C:plasma membrane"/>
    <property type="evidence" value="ECO:0000266"/>
    <property type="project" value="RGD"/>
</dbReference>
<dbReference type="GO" id="GO:0015125">
    <property type="term" value="F:bile acid transmembrane transporter activity"/>
    <property type="evidence" value="ECO:0000314"/>
    <property type="project" value="RGD"/>
</dbReference>
<dbReference type="GO" id="GO:0008514">
    <property type="term" value="F:organic anion transmembrane transporter activity"/>
    <property type="evidence" value="ECO:0000314"/>
    <property type="project" value="UniProtKB"/>
</dbReference>
<dbReference type="GO" id="GO:0015347">
    <property type="term" value="F:sodium-independent organic anion transmembrane transporter activity"/>
    <property type="evidence" value="ECO:0000318"/>
    <property type="project" value="GO_Central"/>
</dbReference>
<dbReference type="GO" id="GO:0022857">
    <property type="term" value="F:transmembrane transporter activity"/>
    <property type="evidence" value="ECO:0000266"/>
    <property type="project" value="RGD"/>
</dbReference>
<dbReference type="GO" id="GO:0015721">
    <property type="term" value="P:bile acid and bile salt transport"/>
    <property type="evidence" value="ECO:0000318"/>
    <property type="project" value="GO_Central"/>
</dbReference>
<dbReference type="GO" id="GO:0071466">
    <property type="term" value="P:cellular response to xenobiotic stimulus"/>
    <property type="evidence" value="ECO:0000270"/>
    <property type="project" value="RGD"/>
</dbReference>
<dbReference type="GO" id="GO:0006820">
    <property type="term" value="P:monoatomic anion transport"/>
    <property type="evidence" value="ECO:0000266"/>
    <property type="project" value="RGD"/>
</dbReference>
<dbReference type="GO" id="GO:0043627">
    <property type="term" value="P:response to estrogen"/>
    <property type="evidence" value="ECO:0000270"/>
    <property type="project" value="RGD"/>
</dbReference>
<dbReference type="GO" id="GO:0043252">
    <property type="term" value="P:sodium-independent organic anion transport"/>
    <property type="evidence" value="ECO:0000314"/>
    <property type="project" value="RGD"/>
</dbReference>
<dbReference type="FunFam" id="1.20.1250.20:FF:000210">
    <property type="entry name" value="Solute carrier organic anion transporter family member"/>
    <property type="match status" value="1"/>
</dbReference>
<dbReference type="Gene3D" id="1.20.1250.20">
    <property type="entry name" value="MFS general substrate transporter like domains"/>
    <property type="match status" value="1"/>
</dbReference>
<dbReference type="InterPro" id="IPR002350">
    <property type="entry name" value="Kazal_dom"/>
</dbReference>
<dbReference type="InterPro" id="IPR036058">
    <property type="entry name" value="Kazal_dom_sf"/>
</dbReference>
<dbReference type="InterPro" id="IPR020846">
    <property type="entry name" value="MFS_dom"/>
</dbReference>
<dbReference type="InterPro" id="IPR036259">
    <property type="entry name" value="MFS_trans_sf"/>
</dbReference>
<dbReference type="InterPro" id="IPR004156">
    <property type="entry name" value="OATP"/>
</dbReference>
<dbReference type="NCBIfam" id="TIGR00805">
    <property type="entry name" value="oat"/>
    <property type="match status" value="1"/>
</dbReference>
<dbReference type="PANTHER" id="PTHR11388">
    <property type="entry name" value="ORGANIC ANION TRANSPORTER"/>
    <property type="match status" value="1"/>
</dbReference>
<dbReference type="PANTHER" id="PTHR11388:SF16">
    <property type="entry name" value="SOLUTE CARRIER ORGANIC ANION TRANSPORTER FAMILY MEMBER 1A2"/>
    <property type="match status" value="1"/>
</dbReference>
<dbReference type="Pfam" id="PF07648">
    <property type="entry name" value="Kazal_2"/>
    <property type="match status" value="1"/>
</dbReference>
<dbReference type="Pfam" id="PF03137">
    <property type="entry name" value="OATP"/>
    <property type="match status" value="1"/>
</dbReference>
<dbReference type="SUPFAM" id="SSF100895">
    <property type="entry name" value="Kazal-type serine protease inhibitors"/>
    <property type="match status" value="1"/>
</dbReference>
<dbReference type="SUPFAM" id="SSF103473">
    <property type="entry name" value="MFS general substrate transporter"/>
    <property type="match status" value="1"/>
</dbReference>
<dbReference type="PROSITE" id="PS51465">
    <property type="entry name" value="KAZAL_2"/>
    <property type="match status" value="1"/>
</dbReference>
<dbReference type="PROSITE" id="PS50850">
    <property type="entry name" value="MFS"/>
    <property type="match status" value="1"/>
</dbReference>
<comment type="function">
    <text evidence="4">Mediates the Na(+)-independent transport of organic anions such as taurocholate, cholate, 17-beta-glucuronosyl estradiol, prostaglandin E2, estrone 3-sulfate, L-thyroxine (T4), the cardiac glycosides ouabain and digoxin and thyroid hormones (PubMed:19129463). May play an especially important role in the brain accumulation and toxicity of digoxin and in the hepatobiliary and renal excretion of cardiac glycosides. Shows a pH-sensitive substrate specificity which may be ascribed to the protonation state of the binding site and leads to a stimulation of substrate transport in an acidic microenvironment (PubMed:19129463). Hydrogencarbonate/HCO3(-) acts as the probable counteranion that exchanges for organic anions (PubMed:19129463).</text>
</comment>
<comment type="catalytic activity">
    <reaction evidence="6">
        <text>estrone 3-sulfate(out) = estrone 3-sulfate(in)</text>
        <dbReference type="Rhea" id="RHEA:71835"/>
        <dbReference type="ChEBI" id="CHEBI:60050"/>
    </reaction>
</comment>
<comment type="catalytic activity">
    <reaction evidence="6">
        <text>taurocholate(out) = taurocholate(in)</text>
        <dbReference type="Rhea" id="RHEA:71703"/>
        <dbReference type="ChEBI" id="CHEBI:36257"/>
    </reaction>
</comment>
<comment type="catalytic activity">
    <reaction evidence="6">
        <text>prostaglandin E2(out) = prostaglandin E2(in)</text>
        <dbReference type="Rhea" id="RHEA:50984"/>
        <dbReference type="ChEBI" id="CHEBI:606564"/>
    </reaction>
</comment>
<comment type="catalytic activity">
    <reaction evidence="6">
        <text>L-thyroxine(out) = L-thyroxine(in)</text>
        <dbReference type="Rhea" id="RHEA:71819"/>
        <dbReference type="ChEBI" id="CHEBI:58448"/>
    </reaction>
</comment>
<comment type="biophysicochemical properties">
    <phDependence>
        <text evidence="4">Optimum pH is 6.5 with estrone 3-sulfate, taurocholate, prostaglandin E2 and L-thyroxine (T4) as substrates.</text>
    </phDependence>
</comment>
<comment type="subcellular location">
    <subcellularLocation>
        <location>Cell membrane</location>
        <topology>Multi-pass membrane protein</topology>
    </subcellularLocation>
</comment>
<comment type="tissue specificity">
    <text>Highly expressed in brain, liver, and kidney but not expressed in heart, spleen, lung, skeletal muscle, and testis.</text>
</comment>
<comment type="domain">
    <text evidence="6">A conserved histidine residue in the third TMD (His-107) may play an essential role in the pH sensitivity of SLCO1A4/OATP1A4-mediated substrate transport.</text>
</comment>
<comment type="similarity">
    <text evidence="5">Belongs to the organo anion transporter (TC 2.A.60) family.</text>
</comment>
<organism>
    <name type="scientific">Rattus norvegicus</name>
    <name type="common">Rat</name>
    <dbReference type="NCBI Taxonomy" id="10116"/>
    <lineage>
        <taxon>Eukaryota</taxon>
        <taxon>Metazoa</taxon>
        <taxon>Chordata</taxon>
        <taxon>Craniata</taxon>
        <taxon>Vertebrata</taxon>
        <taxon>Euteleostomi</taxon>
        <taxon>Mammalia</taxon>
        <taxon>Eutheria</taxon>
        <taxon>Euarchontoglires</taxon>
        <taxon>Glires</taxon>
        <taxon>Rodentia</taxon>
        <taxon>Myomorpha</taxon>
        <taxon>Muroidea</taxon>
        <taxon>Muridae</taxon>
        <taxon>Murinae</taxon>
        <taxon>Rattus</taxon>
    </lineage>
</organism>